<accession>Q5RDE1</accession>
<feature type="chain" id="PRO_0000354072" description="Eukaryotic translation initiation factor 5B">
    <location>
        <begin position="1"/>
        <end position="1220"/>
    </location>
</feature>
<feature type="domain" description="tr-type G" evidence="5">
    <location>
        <begin position="629"/>
        <end position="846"/>
    </location>
</feature>
<feature type="region of interest" description="Disordered" evidence="6">
    <location>
        <begin position="1"/>
        <end position="417"/>
    </location>
</feature>
<feature type="region of interest" description="Disordered" evidence="6">
    <location>
        <begin position="430"/>
        <end position="608"/>
    </location>
</feature>
<feature type="region of interest" description="G1" evidence="5">
    <location>
        <begin position="638"/>
        <end position="645"/>
    </location>
</feature>
<feature type="region of interest" description="G2" evidence="5">
    <location>
        <begin position="663"/>
        <end position="667"/>
    </location>
</feature>
<feature type="region of interest" description="G3" evidence="5">
    <location>
        <begin position="702"/>
        <end position="705"/>
    </location>
</feature>
<feature type="region of interest" description="G4" evidence="5">
    <location>
        <begin position="756"/>
        <end position="759"/>
    </location>
</feature>
<feature type="region of interest" description="G5" evidence="5">
    <location>
        <begin position="824"/>
        <end position="826"/>
    </location>
</feature>
<feature type="compositionally biased region" description="Basic and acidic residues" evidence="6">
    <location>
        <begin position="7"/>
        <end position="16"/>
    </location>
</feature>
<feature type="compositionally biased region" description="Low complexity" evidence="6">
    <location>
        <begin position="20"/>
        <end position="32"/>
    </location>
</feature>
<feature type="compositionally biased region" description="Basic residues" evidence="6">
    <location>
        <begin position="95"/>
        <end position="105"/>
    </location>
</feature>
<feature type="compositionally biased region" description="Acidic residues" evidence="6">
    <location>
        <begin position="109"/>
        <end position="118"/>
    </location>
</feature>
<feature type="compositionally biased region" description="Basic residues" evidence="6">
    <location>
        <begin position="146"/>
        <end position="158"/>
    </location>
</feature>
<feature type="compositionally biased region" description="Basic and acidic residues" evidence="6">
    <location>
        <begin position="170"/>
        <end position="179"/>
    </location>
</feature>
<feature type="compositionally biased region" description="Basic and acidic residues" evidence="6">
    <location>
        <begin position="231"/>
        <end position="282"/>
    </location>
</feature>
<feature type="compositionally biased region" description="Basic and acidic residues" evidence="6">
    <location>
        <begin position="323"/>
        <end position="334"/>
    </location>
</feature>
<feature type="compositionally biased region" description="Basic and acidic residues" evidence="6">
    <location>
        <begin position="349"/>
        <end position="417"/>
    </location>
</feature>
<feature type="compositionally biased region" description="Basic and acidic residues" evidence="6">
    <location>
        <begin position="434"/>
        <end position="449"/>
    </location>
</feature>
<feature type="compositionally biased region" description="Acidic residues" evidence="6">
    <location>
        <begin position="491"/>
        <end position="516"/>
    </location>
</feature>
<feature type="compositionally biased region" description="Acidic residues" evidence="6">
    <location>
        <begin position="531"/>
        <end position="569"/>
    </location>
</feature>
<feature type="compositionally biased region" description="Basic and acidic residues" evidence="6">
    <location>
        <begin position="570"/>
        <end position="588"/>
    </location>
</feature>
<feature type="compositionally biased region" description="Basic and acidic residues" evidence="6">
    <location>
        <begin position="598"/>
        <end position="608"/>
    </location>
</feature>
<feature type="active site" evidence="3">
    <location>
        <position position="706"/>
    </location>
</feature>
<feature type="binding site" evidence="3">
    <location>
        <begin position="640"/>
        <end position="646"/>
    </location>
    <ligand>
        <name>GTP</name>
        <dbReference type="ChEBI" id="CHEBI:37565"/>
    </ligand>
</feature>
<feature type="binding site" evidence="3">
    <location>
        <begin position="663"/>
        <end position="665"/>
    </location>
    <ligand>
        <name>GTP</name>
        <dbReference type="ChEBI" id="CHEBI:37565"/>
    </ligand>
</feature>
<feature type="binding site" evidence="3">
    <location>
        <begin position="756"/>
        <end position="757"/>
    </location>
    <ligand>
        <name>GTP</name>
        <dbReference type="ChEBI" id="CHEBI:37565"/>
    </ligand>
</feature>
<feature type="binding site" evidence="3">
    <location>
        <begin position="759"/>
        <end position="760"/>
    </location>
    <ligand>
        <name>GTP</name>
        <dbReference type="ChEBI" id="CHEBI:37565"/>
    </ligand>
</feature>
<feature type="binding site" evidence="3">
    <location>
        <begin position="825"/>
        <end position="826"/>
    </location>
    <ligand>
        <name>GTP</name>
        <dbReference type="ChEBI" id="CHEBI:37565"/>
    </ligand>
</feature>
<feature type="modified residue" description="Phosphoserine" evidence="3">
    <location>
        <position position="66"/>
    </location>
</feature>
<feature type="modified residue" description="Phosphoserine" evidence="3">
    <location>
        <position position="107"/>
    </location>
</feature>
<feature type="modified residue" description="Phosphoserine" evidence="3">
    <location>
        <position position="113"/>
    </location>
</feature>
<feature type="modified residue" description="Phosphotyrosine" evidence="3">
    <location>
        <position position="134"/>
    </location>
</feature>
<feature type="modified residue" description="Phosphoserine" evidence="3">
    <location>
        <position position="135"/>
    </location>
</feature>
<feature type="modified residue" description="Phosphoserine" evidence="3">
    <location>
        <position position="137"/>
    </location>
</feature>
<feature type="modified residue" description="Phosphoserine" evidence="3">
    <location>
        <position position="164"/>
    </location>
</feature>
<feature type="modified residue" description="Phosphoserine" evidence="3">
    <location>
        <position position="171"/>
    </location>
</feature>
<feature type="modified residue" description="Phosphoserine" evidence="3">
    <location>
        <position position="182"/>
    </location>
</feature>
<feature type="modified residue" description="Phosphoserine" evidence="3">
    <location>
        <position position="183"/>
    </location>
</feature>
<feature type="modified residue" description="Phosphoserine" evidence="3">
    <location>
        <position position="186"/>
    </location>
</feature>
<feature type="modified residue" description="Phosphoserine" evidence="3">
    <location>
        <position position="190"/>
    </location>
</feature>
<feature type="modified residue" description="Phosphoserine" evidence="3">
    <location>
        <position position="214"/>
    </location>
</feature>
<feature type="modified residue" description="Phosphoserine" evidence="3">
    <location>
        <position position="222"/>
    </location>
</feature>
<feature type="modified residue" description="Phosphothreonine" evidence="3">
    <location>
        <position position="301"/>
    </location>
</feature>
<feature type="modified residue" description="Phosphoserine" evidence="3">
    <location>
        <position position="438"/>
    </location>
</feature>
<feature type="modified residue" description="Phosphothreonine" evidence="3">
    <location>
        <position position="498"/>
    </location>
</feature>
<feature type="modified residue" description="Phosphoserine" evidence="3">
    <location>
        <position position="547"/>
    </location>
</feature>
<feature type="modified residue" description="Phosphoserine" evidence="1">
    <location>
        <position position="557"/>
    </location>
</feature>
<feature type="modified residue" description="Phosphoserine" evidence="3">
    <location>
        <position position="560"/>
    </location>
</feature>
<feature type="modified residue" description="Phosphoserine" evidence="3">
    <location>
        <position position="588"/>
    </location>
</feature>
<feature type="modified residue" description="Phosphoserine" evidence="3">
    <location>
        <position position="589"/>
    </location>
</feature>
<feature type="modified residue" description="Phosphoserine" evidence="3">
    <location>
        <position position="591"/>
    </location>
</feature>
<feature type="modified residue" description="Phosphoserine" evidence="3">
    <location>
        <position position="595"/>
    </location>
</feature>
<feature type="modified residue" description="Phosphoserine" evidence="3">
    <location>
        <position position="1168"/>
    </location>
</feature>
<evidence type="ECO:0000250" key="1">
    <source>
        <dbReference type="UniProtKB" id="B2GUV7"/>
    </source>
</evidence>
<evidence type="ECO:0000250" key="2">
    <source>
        <dbReference type="UniProtKB" id="G0S8G9"/>
    </source>
</evidence>
<evidence type="ECO:0000250" key="3">
    <source>
        <dbReference type="UniProtKB" id="O60841"/>
    </source>
</evidence>
<evidence type="ECO:0000250" key="4">
    <source>
        <dbReference type="UniProtKB" id="Q05D44"/>
    </source>
</evidence>
<evidence type="ECO:0000255" key="5">
    <source>
        <dbReference type="PROSITE-ProRule" id="PRU01059"/>
    </source>
</evidence>
<evidence type="ECO:0000256" key="6">
    <source>
        <dbReference type="SAM" id="MobiDB-lite"/>
    </source>
</evidence>
<evidence type="ECO:0000305" key="7"/>
<organism>
    <name type="scientific">Pongo abelii</name>
    <name type="common">Sumatran orangutan</name>
    <name type="synonym">Pongo pygmaeus abelii</name>
    <dbReference type="NCBI Taxonomy" id="9601"/>
    <lineage>
        <taxon>Eukaryota</taxon>
        <taxon>Metazoa</taxon>
        <taxon>Chordata</taxon>
        <taxon>Craniata</taxon>
        <taxon>Vertebrata</taxon>
        <taxon>Euteleostomi</taxon>
        <taxon>Mammalia</taxon>
        <taxon>Eutheria</taxon>
        <taxon>Euarchontoglires</taxon>
        <taxon>Primates</taxon>
        <taxon>Haplorrhini</taxon>
        <taxon>Catarrhini</taxon>
        <taxon>Hominidae</taxon>
        <taxon>Pongo</taxon>
    </lineage>
</organism>
<protein>
    <recommendedName>
        <fullName>Eukaryotic translation initiation factor 5B</fullName>
        <shortName>eIF-5B</shortName>
        <ecNumber>3.6.5.3</ecNumber>
    </recommendedName>
    <alternativeName>
        <fullName>Translation initiation factor IF-2</fullName>
    </alternativeName>
</protein>
<dbReference type="EC" id="3.6.5.3"/>
<dbReference type="EMBL" id="CR857972">
    <property type="protein sequence ID" value="CAH90216.1"/>
    <property type="status" value="ALT_FRAME"/>
    <property type="molecule type" value="mRNA"/>
</dbReference>
<dbReference type="SMR" id="Q5RDE1"/>
<dbReference type="FunCoup" id="Q5RDE1">
    <property type="interactions" value="2183"/>
</dbReference>
<dbReference type="STRING" id="9601.ENSPPYP00000013483"/>
<dbReference type="eggNOG" id="KOG1144">
    <property type="taxonomic scope" value="Eukaryota"/>
</dbReference>
<dbReference type="InParanoid" id="Q5RDE1"/>
<dbReference type="Proteomes" id="UP000001595">
    <property type="component" value="Unplaced"/>
</dbReference>
<dbReference type="GO" id="GO:0005739">
    <property type="term" value="C:mitochondrion"/>
    <property type="evidence" value="ECO:0007669"/>
    <property type="project" value="TreeGrafter"/>
</dbReference>
<dbReference type="GO" id="GO:0005525">
    <property type="term" value="F:GTP binding"/>
    <property type="evidence" value="ECO:0007669"/>
    <property type="project" value="UniProtKB-KW"/>
</dbReference>
<dbReference type="GO" id="GO:0003924">
    <property type="term" value="F:GTPase activity"/>
    <property type="evidence" value="ECO:0007669"/>
    <property type="project" value="InterPro"/>
</dbReference>
<dbReference type="GO" id="GO:0046872">
    <property type="term" value="F:metal ion binding"/>
    <property type="evidence" value="ECO:0007669"/>
    <property type="project" value="UniProtKB-KW"/>
</dbReference>
<dbReference type="GO" id="GO:0003743">
    <property type="term" value="F:translation initiation factor activity"/>
    <property type="evidence" value="ECO:0007669"/>
    <property type="project" value="UniProtKB-KW"/>
</dbReference>
<dbReference type="CDD" id="cd03703">
    <property type="entry name" value="aeIF5B_II"/>
    <property type="match status" value="1"/>
</dbReference>
<dbReference type="CDD" id="cd16266">
    <property type="entry name" value="IF2_aeIF5B_IV"/>
    <property type="match status" value="1"/>
</dbReference>
<dbReference type="CDD" id="cd01887">
    <property type="entry name" value="IF2_eIF5B"/>
    <property type="match status" value="1"/>
</dbReference>
<dbReference type="FunFam" id="2.40.30.10:FF:000026">
    <property type="entry name" value="Eukaryotic translation initiation factor 5B"/>
    <property type="match status" value="1"/>
</dbReference>
<dbReference type="FunFam" id="3.40.50.10050:FF:000002">
    <property type="entry name" value="Eukaryotic translation initiation factor 5B"/>
    <property type="match status" value="1"/>
</dbReference>
<dbReference type="FunFam" id="3.40.50.300:FF:000112">
    <property type="entry name" value="Eukaryotic translation initiation factor 5B"/>
    <property type="match status" value="1"/>
</dbReference>
<dbReference type="FunFam" id="2.40.30.10:FF:000013">
    <property type="entry name" value="eukaryotic translation initiation factor 5B"/>
    <property type="match status" value="1"/>
</dbReference>
<dbReference type="Gene3D" id="3.40.50.300">
    <property type="entry name" value="P-loop containing nucleotide triphosphate hydrolases"/>
    <property type="match status" value="1"/>
</dbReference>
<dbReference type="Gene3D" id="2.40.30.10">
    <property type="entry name" value="Translation factors"/>
    <property type="match status" value="2"/>
</dbReference>
<dbReference type="Gene3D" id="3.40.50.10050">
    <property type="entry name" value="Translation initiation factor IF- 2, domain 3"/>
    <property type="match status" value="1"/>
</dbReference>
<dbReference type="InterPro" id="IPR029459">
    <property type="entry name" value="EFTU-type"/>
</dbReference>
<dbReference type="InterPro" id="IPR027417">
    <property type="entry name" value="P-loop_NTPase"/>
</dbReference>
<dbReference type="InterPro" id="IPR005225">
    <property type="entry name" value="Small_GTP-bd"/>
</dbReference>
<dbReference type="InterPro" id="IPR000795">
    <property type="entry name" value="T_Tr_GTP-bd_dom"/>
</dbReference>
<dbReference type="InterPro" id="IPR015760">
    <property type="entry name" value="TIF_IF2"/>
</dbReference>
<dbReference type="InterPro" id="IPR023115">
    <property type="entry name" value="TIF_IF2_dom3"/>
</dbReference>
<dbReference type="InterPro" id="IPR036925">
    <property type="entry name" value="TIF_IF2_dom3_sf"/>
</dbReference>
<dbReference type="InterPro" id="IPR009000">
    <property type="entry name" value="Transl_B-barrel_sf"/>
</dbReference>
<dbReference type="NCBIfam" id="NF003078">
    <property type="entry name" value="PRK04004.1"/>
    <property type="match status" value="1"/>
</dbReference>
<dbReference type="NCBIfam" id="TIGR00231">
    <property type="entry name" value="small_GTP"/>
    <property type="match status" value="1"/>
</dbReference>
<dbReference type="PANTHER" id="PTHR43381:SF4">
    <property type="entry name" value="EUKARYOTIC TRANSLATION INITIATION FACTOR 5B"/>
    <property type="match status" value="1"/>
</dbReference>
<dbReference type="PANTHER" id="PTHR43381">
    <property type="entry name" value="TRANSLATION INITIATION FACTOR IF-2-RELATED"/>
    <property type="match status" value="1"/>
</dbReference>
<dbReference type="Pfam" id="PF00009">
    <property type="entry name" value="GTP_EFTU"/>
    <property type="match status" value="1"/>
</dbReference>
<dbReference type="Pfam" id="PF14578">
    <property type="entry name" value="GTP_EFTU_D4"/>
    <property type="match status" value="1"/>
</dbReference>
<dbReference type="Pfam" id="PF11987">
    <property type="entry name" value="IF-2"/>
    <property type="match status" value="1"/>
</dbReference>
<dbReference type="PRINTS" id="PR00315">
    <property type="entry name" value="ELONGATNFCT"/>
</dbReference>
<dbReference type="SUPFAM" id="SSF52156">
    <property type="entry name" value="Initiation factor IF2/eIF5b, domain 3"/>
    <property type="match status" value="1"/>
</dbReference>
<dbReference type="SUPFAM" id="SSF52540">
    <property type="entry name" value="P-loop containing nucleoside triphosphate hydrolases"/>
    <property type="match status" value="1"/>
</dbReference>
<dbReference type="SUPFAM" id="SSF50447">
    <property type="entry name" value="Translation proteins"/>
    <property type="match status" value="1"/>
</dbReference>
<dbReference type="PROSITE" id="PS51722">
    <property type="entry name" value="G_TR_2"/>
    <property type="match status" value="1"/>
</dbReference>
<name>IF2P_PONAB</name>
<keyword id="KW-0963">Cytoplasm</keyword>
<keyword id="KW-0342">GTP-binding</keyword>
<keyword id="KW-0378">Hydrolase</keyword>
<keyword id="KW-0396">Initiation factor</keyword>
<keyword id="KW-0479">Metal-binding</keyword>
<keyword id="KW-0547">Nucleotide-binding</keyword>
<keyword id="KW-0597">Phosphoprotein</keyword>
<keyword id="KW-0648">Protein biosynthesis</keyword>
<keyword id="KW-1185">Reference proteome</keyword>
<gene>
    <name type="primary">EIF5B</name>
    <name type="synonym">IF2</name>
</gene>
<reference key="1">
    <citation type="submission" date="2004-11" db="EMBL/GenBank/DDBJ databases">
        <authorList>
            <consortium name="The German cDNA consortium"/>
        </authorList>
    </citation>
    <scope>NUCLEOTIDE SEQUENCE [LARGE SCALE MRNA]</scope>
    <source>
        <tissue>Kidney</tissue>
    </source>
</reference>
<sequence length="1220" mass="138687">MGKKQKNKSEDSTKDDIDLDALAAEIEGAGAAKEQEPQKSKGKKKKEKKKQDFDEDDILKELEELSLEAQGIKADRETVAVKPTENNEEEFTSKDKKKKGQKGKKQSFDDNDSEELEDKDSKSKKTAKPKVEMYSGSDDDDDFNKLPKKAKGKAQKSNKKWDGSEEDEDNSKKIKERSRVNSSGESGDESDEFLQSRKGQKKNQKNKPGPNIESGNEDDDSSFKIKTVAQKKAEKKERERKKRDEEKAKLRKLKEKEESETGKKDQSKQKESQRKSEEETVKSKVTLDTGVIPASEEKAETPTAAEDDNEGDKKKKDKKKKKGEKEEKEKEKKKGPSKATVKAMQEALAKLKEEEERQKREEEERIKRLEELEAKRKEEERLEQEKRERKKQKEKERKERLKKEGKLLTKSQREARARAEATLKLLQAQGVEVPSKDSLPKKRPIYEDKKRKKIPQQLESKEVSESMELCAAVEVMEQGVPEKEETPPPVEPEEEEDTEDAGLDDWEAMASDEETEKVEGNTVHIEVKENPEEEEEEEEEEEEDEESEEEEEEEGESEGSEGDEEDEKVSDEKDSGKTLDKKPSKEMSSDSEYDSDDDRTKEERAYDKAKRRIEKRRLEHSKNVNTEKLRAPIICVLGHVDTGKTKILDKLRHTHVQDGEAGGITQQIGATNVPLEAINEQTKMIKNFGRENVRIPGMLIIDTPGHESFSNLRNRGSSLCDIAILVVDIMHGGEPQKMKPTNLPKPKKCPFMVALNKIDRLYDWKKSPDSDVAATLKKQKKNTKDEFEERAKAIIVEFAQQGLNAALFYENKDPRTFVSLVPTSAHTGDGMGSLIYLLVELTQTMLSKRLAHCEELRAQVMEVKALPGMGTTIDVILINGRLKEGDTIIVPGVEGPIVTQIRGLLLPPPMKELRVKNQYEKHKEVEAAQGVKILGKDLEKTLAGLPLLVAYKEDEIPVLKDELIHELKQTLNAIKLEEKGVYVQASTLGSLEALLEFLKTSEVPYAGINIGPVHKKDVMKASVMLEHDPQYAVILAFDVRIERDAQEMADSLGVRIFSAEIIYHLFDAFTKYRQDYKKQKQEKFKHIAVFPCKMKILPQYIFNSRDPIVMGVTVEAGQVKQGTPMCVPSKNFVDIGIVTSIEINHKQVDVAKKGQEVCVKIEPIPGESPKMFGRHFEATDILVSKISRQSIDALKDWFRDEMQKSDWQLIVELKKVFEII</sequence>
<comment type="function">
    <text evidence="3">Plays a role in translation initiation. Ribosome-dependent GTPase that promotes the joining of the 60S ribosomal subunit to the pre-initiation complex to form the 80S initiation complex with the initiator methionine-tRNA in the P-site base paired to the start codon. Together with eIF1A (EIF1AX), actively orients the initiator methionine-tRNA in a conformation that allows 60S ribosomal subunit joining to form the 80S initiation complex. Is released after formation of the 80S initiation complex. Its GTPase activity is not essential for ribosomal subunits joining, but GTP hydrolysis is needed for eIF1A (EIF1AX) ejection quickly followed by EIF5B release to form elongation-competent ribosomes. In contrast to its procaryotic homolog, does not promote recruitment of Met-rRNA to the small ribosomal subunit.</text>
</comment>
<comment type="catalytic activity">
    <reaction evidence="3">
        <text>GTP + H2O = GDP + phosphate + H(+)</text>
        <dbReference type="Rhea" id="RHEA:19669"/>
        <dbReference type="ChEBI" id="CHEBI:15377"/>
        <dbReference type="ChEBI" id="CHEBI:15378"/>
        <dbReference type="ChEBI" id="CHEBI:37565"/>
        <dbReference type="ChEBI" id="CHEBI:43474"/>
        <dbReference type="ChEBI" id="CHEBI:58189"/>
        <dbReference type="EC" id="3.6.5.3"/>
    </reaction>
    <physiologicalReaction direction="left-to-right" evidence="3">
        <dbReference type="Rhea" id="RHEA:19670"/>
    </physiologicalReaction>
</comment>
<comment type="cofactor">
    <cofactor evidence="2">
        <name>a monovalent cation</name>
        <dbReference type="ChEBI" id="CHEBI:60242"/>
    </cofactor>
    <text evidence="2">Binds 1 monovalent cation per monomer in the active site. Structural cofactor that stabilizes the GTP-bound 'on' state. May also act as a transition state stabilizer of the hydrolysis reaction.</text>
</comment>
<comment type="subunit">
    <text evidence="1 3">Interacts through its C-terminal domain (CTD) with the CTD of eIF1A (EIF1AX) or with the CTD of EIF5 (mutually exclusive) through a common binding site. Interacts with eIF1A (EIF1AX) from the location of the start codon by the 43S complex until the formation of the 80S complex (By similarity). Interacts with ANXA5 in a calcium and phospholipid-dependent manner (By similarity).</text>
</comment>
<comment type="subcellular location">
    <subcellularLocation>
        <location evidence="4">Cytoplasm</location>
    </subcellularLocation>
</comment>
<comment type="similarity">
    <text evidence="7">Belongs to the TRAFAC class translation factor GTPase superfamily. Classic translation factor GTPase family. IF-2 subfamily.</text>
</comment>
<comment type="sequence caution" evidence="7">
    <conflict type="frameshift">
        <sequence resource="EMBL-CDS" id="CAH90216"/>
    </conflict>
</comment>
<proteinExistence type="evidence at transcript level"/>